<name>FTR_ARCFU</name>
<sequence length="297" mass="31762">MKVNGVEVEETFAEAFDIKIARVLITGYDYYWAWVAANEATGFGTSVIMCPAEAGIEIKAKPSETPDGRPGYYIQICHMSKKGLEEQLLARLGQCVLTAPTTAVFNGLPDAEEKFDTGFKLKFFADGYEKEVEVGGRKCWAVPMMEGDFIIENDIGYTNGIAGGNFFIMAETQPSALAAAKAAVDAISDVEGVITPFPGGIVASGSKVGANKYKFLKASTNEKFAPSIRDQVEGTQIPEGVKAVYEIVINGLNADAIKEATRVGILAATKIPGVVKITAGNYGGKLGKHIINLNELF</sequence>
<feature type="chain" id="PRO_0000138115" description="Formylmethanofuran--tetrahydromethanopterin formyltransferase">
    <location>
        <begin position="1"/>
        <end position="297"/>
    </location>
</feature>
<feature type="sequence conflict" description="In Ref. 2; AA sequence and 3; AA sequence." evidence="4" ref="2 3">
    <location>
        <position position="32"/>
    </location>
</feature>
<feature type="sequence conflict" description="In Ref. 2; AA sequence and 3; AA sequence." evidence="4" ref="2 3">
    <original>W</original>
    <variation>I</variation>
    <location>
        <position position="34"/>
    </location>
</feature>
<feature type="sequence conflict" description="In Ref. 3; AA sequence." evidence="4" ref="3">
    <original>F</original>
    <variation>T</variation>
    <location>
        <position position="43"/>
    </location>
</feature>
<feature type="strand" evidence="5">
    <location>
        <begin position="6"/>
        <end position="8"/>
    </location>
</feature>
<feature type="strand" evidence="5">
    <location>
        <begin position="12"/>
        <end position="26"/>
    </location>
</feature>
<feature type="helix" evidence="5">
    <location>
        <begin position="30"/>
        <end position="41"/>
    </location>
</feature>
<feature type="turn" evidence="5">
    <location>
        <begin position="47"/>
        <end position="49"/>
    </location>
</feature>
<feature type="strand" evidence="5">
    <location>
        <begin position="53"/>
        <end position="60"/>
    </location>
</feature>
<feature type="helix" evidence="5">
    <location>
        <begin position="62"/>
        <end position="64"/>
    </location>
</feature>
<feature type="strand" evidence="5">
    <location>
        <begin position="71"/>
        <end position="80"/>
    </location>
</feature>
<feature type="helix" evidence="5">
    <location>
        <begin position="81"/>
        <end position="95"/>
    </location>
</feature>
<feature type="turn" evidence="5">
    <location>
        <begin position="96"/>
        <end position="98"/>
    </location>
</feature>
<feature type="strand" evidence="5">
    <location>
        <begin position="103"/>
        <end position="107"/>
    </location>
</feature>
<feature type="strand" evidence="5">
    <location>
        <begin position="112"/>
        <end position="115"/>
    </location>
</feature>
<feature type="helix" evidence="5">
    <location>
        <begin position="117"/>
        <end position="121"/>
    </location>
</feature>
<feature type="helix" evidence="5">
    <location>
        <begin position="122"/>
        <end position="125"/>
    </location>
</feature>
<feature type="strand" evidence="5">
    <location>
        <begin position="130"/>
        <end position="134"/>
    </location>
</feature>
<feature type="strand" evidence="5">
    <location>
        <begin position="137"/>
        <end position="143"/>
    </location>
</feature>
<feature type="strand" evidence="5">
    <location>
        <begin position="145"/>
        <end position="153"/>
    </location>
</feature>
<feature type="strand" evidence="5">
    <location>
        <begin position="155"/>
        <end position="172"/>
    </location>
</feature>
<feature type="helix" evidence="5">
    <location>
        <begin position="173"/>
        <end position="188"/>
    </location>
</feature>
<feature type="helix" evidence="5">
    <location>
        <begin position="198"/>
        <end position="200"/>
    </location>
</feature>
<feature type="strand" evidence="5">
    <location>
        <begin position="202"/>
        <end position="204"/>
    </location>
</feature>
<feature type="strand" evidence="5">
    <location>
        <begin position="207"/>
        <end position="209"/>
    </location>
</feature>
<feature type="helix" evidence="5">
    <location>
        <begin position="222"/>
        <end position="224"/>
    </location>
</feature>
<feature type="helix" evidence="5">
    <location>
        <begin position="226"/>
        <end position="228"/>
    </location>
</feature>
<feature type="helix" evidence="5">
    <location>
        <begin position="229"/>
        <end position="232"/>
    </location>
</feature>
<feature type="strand" evidence="5">
    <location>
        <begin position="243"/>
        <end position="253"/>
    </location>
</feature>
<feature type="helix" evidence="5">
    <location>
        <begin position="254"/>
        <end position="268"/>
    </location>
</feature>
<feature type="strand" evidence="5">
    <location>
        <begin position="274"/>
        <end position="278"/>
    </location>
</feature>
<feature type="turn" evidence="5">
    <location>
        <begin position="283"/>
        <end position="285"/>
    </location>
</feature>
<feature type="strand" evidence="5">
    <location>
        <begin position="288"/>
        <end position="292"/>
    </location>
</feature>
<feature type="helix" evidence="5">
    <location>
        <begin position="293"/>
        <end position="295"/>
    </location>
</feature>
<reference key="1">
    <citation type="journal article" date="1997" name="Nature">
        <title>The complete genome sequence of the hyperthermophilic, sulphate-reducing archaeon Archaeoglobus fulgidus.</title>
        <authorList>
            <person name="Klenk H.-P."/>
            <person name="Clayton R.A."/>
            <person name="Tomb J.-F."/>
            <person name="White O."/>
            <person name="Nelson K.E."/>
            <person name="Ketchum K.A."/>
            <person name="Dodson R.J."/>
            <person name="Gwinn M.L."/>
            <person name="Hickey E.K."/>
            <person name="Peterson J.D."/>
            <person name="Richardson D.L."/>
            <person name="Kerlavage A.R."/>
            <person name="Graham D.E."/>
            <person name="Kyrpides N.C."/>
            <person name="Fleischmann R.D."/>
            <person name="Quackenbush J."/>
            <person name="Lee N.H."/>
            <person name="Sutton G.G."/>
            <person name="Gill S.R."/>
            <person name="Kirkness E.F."/>
            <person name="Dougherty B.A."/>
            <person name="McKenney K."/>
            <person name="Adams M.D."/>
            <person name="Loftus B.J."/>
            <person name="Peterson S.N."/>
            <person name="Reich C.I."/>
            <person name="McNeil L.K."/>
            <person name="Badger J.H."/>
            <person name="Glodek A."/>
            <person name="Zhou L."/>
            <person name="Overbeek R."/>
            <person name="Gocayne J.D."/>
            <person name="Weidman J.F."/>
            <person name="McDonald L.A."/>
            <person name="Utterback T.R."/>
            <person name="Cotton M.D."/>
            <person name="Spriggs T."/>
            <person name="Artiach P."/>
            <person name="Kaine B.P."/>
            <person name="Sykes S.M."/>
            <person name="Sadow P.W."/>
            <person name="D'Andrea K.P."/>
            <person name="Bowman C."/>
            <person name="Fujii C."/>
            <person name="Garland S.A."/>
            <person name="Mason T.M."/>
            <person name="Olsen G.J."/>
            <person name="Fraser C.M."/>
            <person name="Smith H.O."/>
            <person name="Woese C.R."/>
            <person name="Venter J.C."/>
        </authorList>
    </citation>
    <scope>NUCLEOTIDE SEQUENCE [LARGE SCALE GENOMIC DNA]</scope>
    <source>
        <strain>ATCC 49558 / DSM 4304 / JCM 9628 / NBRC 100126 / VC-16</strain>
    </source>
</reference>
<reference key="2">
    <citation type="journal article" date="1992" name="Eur. J. Biochem.">
        <title>Salt dependence, kinetic properties and catalytic mechanism of N-formylmethanofuran:tetrahydromethanopterin formyltransferase from the extreme thermophile Methanopyrus kandleri.</title>
        <authorList>
            <person name="Breitung J."/>
            <person name="Borner G."/>
            <person name="Scholz S."/>
            <person name="Linder D."/>
            <person name="Stetter K.O."/>
            <person name="Thauer R.K."/>
        </authorList>
    </citation>
    <scope>PROTEIN SEQUENCE OF 1-48</scope>
    <source>
        <strain>ATCC 49558 / DSM 4304 / JCM 9628 / NBRC 100126 / VC-16</strain>
    </source>
</reference>
<reference key="3">
    <citation type="journal article" date="1993" name="Arch. Microbiol.">
        <title>Formylmethanofuran: tetrahydromethanopterin formyltransferase and N5,N10-methylenetetrahydromethanopterin dehydrogenase from the sulfate-reducing Archaeoglobus fulgidus: similarities with the enzymes from methanogenic Archaea.</title>
        <authorList>
            <person name="Schworer B."/>
            <person name="Breitung J."/>
            <person name="Klein A.R."/>
            <person name="Stetter K.O."/>
            <person name="Thauer R.K."/>
        </authorList>
    </citation>
    <scope>PROTEIN SEQUENCE OF 1-48</scope>
    <scope>FUNCTION</scope>
    <source>
        <strain>ATCC 49558 / DSM 4304 / JCM 9628 / NBRC 100126 / VC-16</strain>
    </source>
</reference>
<reference key="4">
    <citation type="journal article" date="2002" name="Protein Sci.">
        <title>Crystal structures and enzymatic properties of three formyltransferases from archaea: environmental adaptation and evolutionary relationship.</title>
        <authorList>
            <person name="Mamat B."/>
            <person name="Roth A."/>
            <person name="Grimm C."/>
            <person name="Ermler U."/>
            <person name="Tziatzios C."/>
            <person name="Schubert D."/>
            <person name="Thauer R.K."/>
            <person name="Shima S."/>
        </authorList>
    </citation>
    <scope>X-RAY CRYSTALLOGRAPHY (2.0 ANGSTROMS)</scope>
</reference>
<comment type="function">
    <text evidence="1 2">Catalyzes the transfer of a formyl group from 5-formyl tetrahydromethanopterin (5-formyl-H(4)MPT) to methanofuran (MFR) to produce formylmethanofuran (formyl-MFR) and tetrahydromethanopterin (H(4)MPT).</text>
</comment>
<comment type="catalytic activity">
    <reaction evidence="1">
        <text>N-formylmethanofuran + 5,6,7,8-tetrahydromethanopterin + H(+) = N(5)-formyl-5,6,7,8-tetrahydromethanopterin + methanofuran</text>
        <dbReference type="Rhea" id="RHEA:18061"/>
        <dbReference type="ChEBI" id="CHEBI:15378"/>
        <dbReference type="ChEBI" id="CHEBI:57727"/>
        <dbReference type="ChEBI" id="CHEBI:58018"/>
        <dbReference type="ChEBI" id="CHEBI:58103"/>
        <dbReference type="ChEBI" id="CHEBI:58151"/>
        <dbReference type="EC" id="2.3.1.101"/>
    </reaction>
</comment>
<comment type="pathway">
    <text evidence="1">Metabolic intermediate metabolism; lactate oxidation.</text>
</comment>
<comment type="subunit">
    <text evidence="1">Homotetramer.</text>
</comment>
<comment type="subcellular location">
    <subcellularLocation>
        <location evidence="1">Cytoplasm</location>
    </subcellularLocation>
</comment>
<comment type="similarity">
    <text evidence="1">Belongs to the FTR family.</text>
</comment>
<organism>
    <name type="scientific">Archaeoglobus fulgidus (strain ATCC 49558 / DSM 4304 / JCM 9628 / NBRC 100126 / VC-16)</name>
    <dbReference type="NCBI Taxonomy" id="224325"/>
    <lineage>
        <taxon>Archaea</taxon>
        <taxon>Methanobacteriati</taxon>
        <taxon>Methanobacteriota</taxon>
        <taxon>Archaeoglobi</taxon>
        <taxon>Archaeoglobales</taxon>
        <taxon>Archaeoglobaceae</taxon>
        <taxon>Archaeoglobus</taxon>
    </lineage>
</organism>
<gene>
    <name evidence="1" type="primary">ftr</name>
    <name type="ordered locus">AF_2207</name>
</gene>
<protein>
    <recommendedName>
        <fullName evidence="1 3">Formylmethanofuran--tetrahydromethanopterin formyltransferase</fullName>
        <shortName evidence="1">Ftr</shortName>
        <ecNumber evidence="1">2.3.1.101</ecNumber>
    </recommendedName>
    <alternativeName>
        <fullName evidence="1">H4MPT formyltransferase</fullName>
    </alternativeName>
</protein>
<evidence type="ECO:0000255" key="1">
    <source>
        <dbReference type="HAMAP-Rule" id="MF_00579"/>
    </source>
</evidence>
<evidence type="ECO:0000269" key="2">
    <source>
    </source>
</evidence>
<evidence type="ECO:0000303" key="3">
    <source>
    </source>
</evidence>
<evidence type="ECO:0000305" key="4"/>
<evidence type="ECO:0007829" key="5">
    <source>
        <dbReference type="PDB" id="1M5H"/>
    </source>
</evidence>
<accession>O28076</accession>
<keyword id="KW-0002">3D-structure</keyword>
<keyword id="KW-0012">Acyltransferase</keyword>
<keyword id="KW-0963">Cytoplasm</keyword>
<keyword id="KW-0903">Direct protein sequencing</keyword>
<keyword id="KW-0554">One-carbon metabolism</keyword>
<keyword id="KW-1185">Reference proteome</keyword>
<keyword id="KW-0808">Transferase</keyword>
<proteinExistence type="evidence at protein level"/>
<dbReference type="EC" id="2.3.1.101" evidence="1"/>
<dbReference type="EMBL" id="AE000782">
    <property type="protein sequence ID" value="AAB89046.1"/>
    <property type="molecule type" value="Genomic_DNA"/>
</dbReference>
<dbReference type="PIR" id="G69525">
    <property type="entry name" value="G69525"/>
</dbReference>
<dbReference type="PDB" id="1M5H">
    <property type="method" value="X-ray"/>
    <property type="resolution" value="2.00 A"/>
    <property type="chains" value="A/B/C/D/E/F/G/H=1-297"/>
</dbReference>
<dbReference type="PDBsum" id="1M5H"/>
<dbReference type="SMR" id="O28076"/>
<dbReference type="STRING" id="224325.AF_2207"/>
<dbReference type="PaxDb" id="224325-AF_2207"/>
<dbReference type="EnsemblBacteria" id="AAB89046">
    <property type="protein sequence ID" value="AAB89046"/>
    <property type="gene ID" value="AF_2207"/>
</dbReference>
<dbReference type="KEGG" id="afu:AF_2207"/>
<dbReference type="eggNOG" id="arCOG02695">
    <property type="taxonomic scope" value="Archaea"/>
</dbReference>
<dbReference type="HOGENOM" id="CLU_081314_0_0_2"/>
<dbReference type="OrthoDB" id="81373at2157"/>
<dbReference type="PhylomeDB" id="O28076"/>
<dbReference type="BioCyc" id="MetaCyc:AF_RS11105-MONOMER"/>
<dbReference type="BRENDA" id="2.3.1.101">
    <property type="organism ID" value="414"/>
</dbReference>
<dbReference type="UniPathway" id="UPA00701"/>
<dbReference type="EvolutionaryTrace" id="O28076"/>
<dbReference type="Proteomes" id="UP000002199">
    <property type="component" value="Chromosome"/>
</dbReference>
<dbReference type="GO" id="GO:0005737">
    <property type="term" value="C:cytoplasm"/>
    <property type="evidence" value="ECO:0007669"/>
    <property type="project" value="UniProtKB-SubCell"/>
</dbReference>
<dbReference type="GO" id="GO:0030270">
    <property type="term" value="F:formylmethanofuran-tetrahydromethanopterin N-formyltransferase activity"/>
    <property type="evidence" value="ECO:0007669"/>
    <property type="project" value="UniProtKB-UniRule"/>
</dbReference>
<dbReference type="GO" id="GO:0006089">
    <property type="term" value="P:lactate metabolic process"/>
    <property type="evidence" value="ECO:0007669"/>
    <property type="project" value="UniProtKB-UniRule"/>
</dbReference>
<dbReference type="GO" id="GO:0006730">
    <property type="term" value="P:one-carbon metabolic process"/>
    <property type="evidence" value="ECO:0007669"/>
    <property type="project" value="UniProtKB-UniRule"/>
</dbReference>
<dbReference type="Gene3D" id="3.30.70.520">
    <property type="match status" value="2"/>
</dbReference>
<dbReference type="HAMAP" id="MF_00579">
    <property type="entry name" value="FTR"/>
    <property type="match status" value="1"/>
</dbReference>
<dbReference type="InterPro" id="IPR014053">
    <property type="entry name" value="ForMFR_H4MPT_ForTrfase"/>
</dbReference>
<dbReference type="InterPro" id="IPR002770">
    <property type="entry name" value="ForMFR_H4MPT_ForTrfase_C"/>
</dbReference>
<dbReference type="InterPro" id="IPR023447">
    <property type="entry name" value="ForMFR_H4MPT_ForTrfase_fd-like"/>
</dbReference>
<dbReference type="InterPro" id="IPR022667">
    <property type="entry name" value="ForMFR_H4MPT_ForTrfase_N"/>
</dbReference>
<dbReference type="NCBIfam" id="TIGR03119">
    <property type="entry name" value="one_C_fhcD"/>
    <property type="match status" value="1"/>
</dbReference>
<dbReference type="NCBIfam" id="NF002554">
    <property type="entry name" value="PRK02114.1"/>
    <property type="match status" value="1"/>
</dbReference>
<dbReference type="Pfam" id="PF01913">
    <property type="entry name" value="FTR"/>
    <property type="match status" value="1"/>
</dbReference>
<dbReference type="Pfam" id="PF02741">
    <property type="entry name" value="FTR_C"/>
    <property type="match status" value="1"/>
</dbReference>
<dbReference type="PIRSF" id="PIRSF006414">
    <property type="entry name" value="Ftr_formyl_trnsf"/>
    <property type="match status" value="1"/>
</dbReference>
<dbReference type="SUPFAM" id="SSF55112">
    <property type="entry name" value="Formylmethanofuran:tetrahydromethanopterin formyltransferase"/>
    <property type="match status" value="2"/>
</dbReference>